<feature type="chain" id="PRO_1000136918" description="Universal stress protein B">
    <location>
        <begin position="1"/>
        <end position="111"/>
    </location>
</feature>
<feature type="transmembrane region" description="Helical" evidence="1">
    <location>
        <begin position="1"/>
        <end position="21"/>
    </location>
</feature>
<feature type="transmembrane region" description="Helical" evidence="1">
    <location>
        <begin position="90"/>
        <end position="110"/>
    </location>
</feature>
<dbReference type="EMBL" id="CU928158">
    <property type="protein sequence ID" value="CAQ90964.1"/>
    <property type="molecule type" value="Genomic_DNA"/>
</dbReference>
<dbReference type="RefSeq" id="WP_000626190.1">
    <property type="nucleotide sequence ID" value="NC_011740.1"/>
</dbReference>
<dbReference type="GeneID" id="75059904"/>
<dbReference type="KEGG" id="efe:EFER_3487"/>
<dbReference type="HOGENOM" id="CLU_151816_0_0_6"/>
<dbReference type="OrthoDB" id="6432605at2"/>
<dbReference type="Proteomes" id="UP000000745">
    <property type="component" value="Chromosome"/>
</dbReference>
<dbReference type="GO" id="GO:0005886">
    <property type="term" value="C:plasma membrane"/>
    <property type="evidence" value="ECO:0007669"/>
    <property type="project" value="UniProtKB-SubCell"/>
</dbReference>
<dbReference type="HAMAP" id="MF_01088">
    <property type="entry name" value="UspB"/>
    <property type="match status" value="1"/>
</dbReference>
<dbReference type="InterPro" id="IPR019598">
    <property type="entry name" value="Universal_stress_protein_B"/>
</dbReference>
<dbReference type="NCBIfam" id="NF003435">
    <property type="entry name" value="PRK04960.1"/>
    <property type="match status" value="1"/>
</dbReference>
<dbReference type="Pfam" id="PF10625">
    <property type="entry name" value="UspB"/>
    <property type="match status" value="1"/>
</dbReference>
<name>USPB_ESCF3</name>
<comment type="subcellular location">
    <subcellularLocation>
        <location evidence="1">Cell inner membrane</location>
        <topology evidence="1">Multi-pass membrane protein</topology>
    </subcellularLocation>
</comment>
<comment type="similarity">
    <text evidence="1">Belongs to the universal stress protein B family.</text>
</comment>
<accession>B7LSX5</accession>
<gene>
    <name evidence="1" type="primary">uspB</name>
    <name type="ordered locus">EFER_3487</name>
</gene>
<protein>
    <recommendedName>
        <fullName evidence="1">Universal stress protein B</fullName>
    </recommendedName>
</protein>
<reference key="1">
    <citation type="journal article" date="2009" name="PLoS Genet.">
        <title>Organised genome dynamics in the Escherichia coli species results in highly diverse adaptive paths.</title>
        <authorList>
            <person name="Touchon M."/>
            <person name="Hoede C."/>
            <person name="Tenaillon O."/>
            <person name="Barbe V."/>
            <person name="Baeriswyl S."/>
            <person name="Bidet P."/>
            <person name="Bingen E."/>
            <person name="Bonacorsi S."/>
            <person name="Bouchier C."/>
            <person name="Bouvet O."/>
            <person name="Calteau A."/>
            <person name="Chiapello H."/>
            <person name="Clermont O."/>
            <person name="Cruveiller S."/>
            <person name="Danchin A."/>
            <person name="Diard M."/>
            <person name="Dossat C."/>
            <person name="Karoui M.E."/>
            <person name="Frapy E."/>
            <person name="Garry L."/>
            <person name="Ghigo J.M."/>
            <person name="Gilles A.M."/>
            <person name="Johnson J."/>
            <person name="Le Bouguenec C."/>
            <person name="Lescat M."/>
            <person name="Mangenot S."/>
            <person name="Martinez-Jehanne V."/>
            <person name="Matic I."/>
            <person name="Nassif X."/>
            <person name="Oztas S."/>
            <person name="Petit M.A."/>
            <person name="Pichon C."/>
            <person name="Rouy Z."/>
            <person name="Ruf C.S."/>
            <person name="Schneider D."/>
            <person name="Tourret J."/>
            <person name="Vacherie B."/>
            <person name="Vallenet D."/>
            <person name="Medigue C."/>
            <person name="Rocha E.P.C."/>
            <person name="Denamur E."/>
        </authorList>
    </citation>
    <scope>NUCLEOTIDE SEQUENCE [LARGE SCALE GENOMIC DNA]</scope>
    <source>
        <strain>ATCC 35469 / DSM 13698 / BCRC 15582 / CCUG 18766 / IAM 14443 / JCM 21226 / LMG 7866 / NBRC 102419 / NCTC 12128 / CDC 0568-73</strain>
    </source>
</reference>
<organism>
    <name type="scientific">Escherichia fergusonii (strain ATCC 35469 / DSM 13698 / CCUG 18766 / IAM 14443 / JCM 21226 / LMG 7866 / NBRC 102419 / NCTC 12128 / CDC 0568-73)</name>
    <dbReference type="NCBI Taxonomy" id="585054"/>
    <lineage>
        <taxon>Bacteria</taxon>
        <taxon>Pseudomonadati</taxon>
        <taxon>Pseudomonadota</taxon>
        <taxon>Gammaproteobacteria</taxon>
        <taxon>Enterobacterales</taxon>
        <taxon>Enterobacteriaceae</taxon>
        <taxon>Escherichia</taxon>
    </lineage>
</organism>
<sequence length="111" mass="12980">MISTVALFWGLCVVCIINMARYFSSLRALLVVLRGCDPLLYQYVDGGGFFTSHGQPNKQVRLVWYIYAQRYRDHHDEEFIRRCERVRRQFILTSALCGLVVISLIALLIWH</sequence>
<keyword id="KW-0997">Cell inner membrane</keyword>
<keyword id="KW-1003">Cell membrane</keyword>
<keyword id="KW-0472">Membrane</keyword>
<keyword id="KW-0812">Transmembrane</keyword>
<keyword id="KW-1133">Transmembrane helix</keyword>
<evidence type="ECO:0000255" key="1">
    <source>
        <dbReference type="HAMAP-Rule" id="MF_01088"/>
    </source>
</evidence>
<proteinExistence type="inferred from homology"/>